<proteinExistence type="evidence at transcript level"/>
<name>TNFA_CAMBA</name>
<comment type="function">
    <text evidence="2 3">Cytokine that binds to TNFRSF1A/TNFR1 and TNFRSF1B/TNFBR. It is mainly secreted by macrophages and can induce cell death of certain tumor cell lines. It is potent pyrogen causing fever by direct action or by stimulation of interleukin-1 secretion and is implicated in the induction of cachexia, Under certain conditions it can stimulate cell proliferation and induce cell differentiation (By similarity). Induces insulin resistance in adipocytes via inhibition of insulin-induced IRS1 tyrosine phosphorylation and insulin-induced glucose uptake. Induces GKAP42 protein degradation in adipocytes which is partially responsible for TNF-induced insulin resistance (By similarity). Plays a role in angiogenesis by inducing VEGF production synergistically with IL1B and IL6 (By similarity). Promotes osteoclastogenesis and therefore mediates bone resorption (By similarity).</text>
</comment>
<comment type="function">
    <text evidence="2">The TNF intracellular domain (ICD) form induces IL12 production in dendritic cells.</text>
</comment>
<comment type="subunit">
    <text evidence="1">Homotrimer. Interacts with SPPL2B (By similarity).</text>
</comment>
<comment type="subcellular location">
    <subcellularLocation>
        <location evidence="1">Cell membrane</location>
        <topology evidence="1">Single-pass type II membrane protein</topology>
    </subcellularLocation>
</comment>
<comment type="subcellular location">
    <molecule>Tumor necrosis factor, membrane form</molecule>
    <subcellularLocation>
        <location evidence="1">Membrane</location>
        <topology evidence="1">Single-pass type II membrane protein</topology>
    </subcellularLocation>
</comment>
<comment type="subcellular location">
    <molecule>Tumor necrosis factor, soluble form</molecule>
    <subcellularLocation>
        <location evidence="1">Secreted</location>
    </subcellularLocation>
</comment>
<comment type="subcellular location">
    <molecule>C-domain 1</molecule>
    <subcellularLocation>
        <location evidence="1">Secreted</location>
    </subcellularLocation>
</comment>
<comment type="subcellular location">
    <molecule>C-domain 2</molecule>
    <subcellularLocation>
        <location evidence="1">Secreted</location>
    </subcellularLocation>
</comment>
<comment type="PTM">
    <text evidence="1">The soluble form derives from the membrane form by proteolytic processing. The membrane-bound form is further proteolytically processed by SPPL2A or SPPL2B through regulated intramembrane proteolysis producing TNF intracellular domains (ICD1 and ICD2) released in the cytosol and TNF C-domain 1 and C-domain 2 secreted into the extracellular space (By similarity).</text>
</comment>
<comment type="PTM">
    <text evidence="1">The membrane form, but not the soluble form, is phosphorylated on serine residues. Dephosphorylation of the membrane form occurs by binding to soluble TNFRSF1A/TNFR1 (By similarity).</text>
</comment>
<comment type="PTM">
    <text evidence="1">O-glycosylated; glycans contain galactose, N-acetylgalactosamine and N-acetylneuraminic acid.</text>
</comment>
<comment type="PTM">
    <molecule>Tumor necrosis factor, soluble form</molecule>
    <text evidence="2">The soluble form is demyristoylated by SIRT6, promoting its secretion.</text>
</comment>
<comment type="similarity">
    <text evidence="6">Belongs to the tumor necrosis factor family.</text>
</comment>
<feature type="chain" id="PRO_0000034407" description="Tumor necrosis factor, membrane form">
    <location>
        <begin position="1"/>
        <end position="233"/>
    </location>
</feature>
<feature type="chain" id="PRO_0000417195" description="Intracellular domain 1" evidence="1">
    <location>
        <begin position="1"/>
        <end position="39"/>
    </location>
</feature>
<feature type="chain" id="PRO_0000417196" description="Intracellular domain 2" evidence="1">
    <location>
        <begin position="1"/>
        <end position="35"/>
    </location>
</feature>
<feature type="chain" id="PRO_0000417197" description="C-domain 1" evidence="1">
    <location>
        <begin position="50"/>
        <end status="unknown"/>
    </location>
</feature>
<feature type="chain" id="PRO_0000417198" description="C-domain 2" evidence="1">
    <location>
        <begin position="52"/>
        <end status="unknown"/>
    </location>
</feature>
<feature type="chain" id="PRO_0000034408" description="Tumor necrosis factor, soluble form" evidence="1">
    <location>
        <begin position="77"/>
        <end position="233"/>
    </location>
</feature>
<feature type="topological domain" description="Cytoplasmic" evidence="4">
    <location>
        <begin position="1"/>
        <end position="34"/>
    </location>
</feature>
<feature type="transmembrane region" description="Helical; Signal-anchor for type II membrane protein" evidence="1">
    <location>
        <begin position="35"/>
        <end position="57"/>
    </location>
</feature>
<feature type="topological domain" description="Extracellular" evidence="4">
    <location>
        <begin position="58"/>
        <end position="233"/>
    </location>
</feature>
<feature type="domain" description="THD" evidence="5">
    <location>
        <begin position="88"/>
        <end position="233"/>
    </location>
</feature>
<feature type="site" description="Cleavage; by SPPL2A or SPPL2B" evidence="1">
    <location>
        <begin position="34"/>
        <end position="35"/>
    </location>
</feature>
<feature type="site" description="Cleavage; by SPPL2A or SPPL2B" evidence="1">
    <location>
        <begin position="39"/>
        <end position="40"/>
    </location>
</feature>
<feature type="site" description="Cleavage; by SPPL2A or SPPL2B" evidence="1">
    <location>
        <begin position="49"/>
        <end position="50"/>
    </location>
</feature>
<feature type="site" description="Cleavage; by SPPL2A or SPPL2B" evidence="1">
    <location>
        <begin position="51"/>
        <end position="52"/>
    </location>
</feature>
<feature type="site" description="Cleavage; by ADAM17" evidence="1">
    <location>
        <begin position="76"/>
        <end position="77"/>
    </location>
</feature>
<feature type="modified residue" description="Phosphoserine; by CK1" evidence="1">
    <location>
        <position position="2"/>
    </location>
</feature>
<feature type="lipid moiety-binding region" description="N6-myristoyl lysine" evidence="2">
    <location>
        <position position="19"/>
    </location>
</feature>
<feature type="lipid moiety-binding region" description="N6-myristoyl lysine" evidence="2">
    <location>
        <position position="20"/>
    </location>
</feature>
<feature type="glycosylation site" description="O-linked (GalNAc...) serine; in soluble form" evidence="1">
    <location>
        <position position="80"/>
    </location>
</feature>
<feature type="disulfide bond" evidence="5">
    <location>
        <begin position="145"/>
        <end position="177"/>
    </location>
</feature>
<gene>
    <name type="primary">TNF</name>
    <name type="synonym">TNFA</name>
    <name type="synonym">TNFSF2</name>
</gene>
<reference key="1">
    <citation type="journal article" date="2005" name="J. Vet. Med. Sci.">
        <title>Molecular cloning and phylogenetic analysis of inflammatory cytokines of Camelidae (llama and camel).</title>
        <authorList>
            <person name="Odbileg R."/>
            <person name="Konnai S."/>
            <person name="Ohashi K."/>
            <person name="Onuma M."/>
        </authorList>
    </citation>
    <scope>NUCLEOTIDE SEQUENCE [MRNA]</scope>
</reference>
<sequence length="233" mass="25437">MSTESMIRDVELAEEALPKKAGGPQGSRRCLCLSLFSFLLVAGATTLFCLLHFGVIGPQKEELLTGLQLMNPLAQTLRSSSQASRDKPVAHVVADPAAQGQLQWEKRFANTLLANGVKLEDNQLVVPTDGLYLIYSQVLFSGQRCPSTPVFLTHTISRLAVSYPNKANLLSAIKSPCQGGTSEEAEAKPWYEPIYLGGVFQLEKDDRLSAEINMPNYLDFAESGQVYFGIIAL</sequence>
<accession>Q75N23</accession>
<evidence type="ECO:0000250" key="1"/>
<evidence type="ECO:0000250" key="2">
    <source>
        <dbReference type="UniProtKB" id="P01375"/>
    </source>
</evidence>
<evidence type="ECO:0000250" key="3">
    <source>
        <dbReference type="UniProtKB" id="P06804"/>
    </source>
</evidence>
<evidence type="ECO:0000255" key="4"/>
<evidence type="ECO:0000255" key="5">
    <source>
        <dbReference type="PROSITE-ProRule" id="PRU01387"/>
    </source>
</evidence>
<evidence type="ECO:0000305" key="6"/>
<keyword id="KW-1003">Cell membrane</keyword>
<keyword id="KW-0202">Cytokine</keyword>
<keyword id="KW-1015">Disulfide bond</keyword>
<keyword id="KW-0325">Glycoprotein</keyword>
<keyword id="KW-0449">Lipoprotein</keyword>
<keyword id="KW-0472">Membrane</keyword>
<keyword id="KW-0519">Myristate</keyword>
<keyword id="KW-0597">Phosphoprotein</keyword>
<keyword id="KW-1185">Reference proteome</keyword>
<keyword id="KW-0964">Secreted</keyword>
<keyword id="KW-0735">Signal-anchor</keyword>
<keyword id="KW-0812">Transmembrane</keyword>
<keyword id="KW-1133">Transmembrane helix</keyword>
<organism>
    <name type="scientific">Camelus bactrianus</name>
    <name type="common">Bactrian camel</name>
    <dbReference type="NCBI Taxonomy" id="9837"/>
    <lineage>
        <taxon>Eukaryota</taxon>
        <taxon>Metazoa</taxon>
        <taxon>Chordata</taxon>
        <taxon>Craniata</taxon>
        <taxon>Vertebrata</taxon>
        <taxon>Euteleostomi</taxon>
        <taxon>Mammalia</taxon>
        <taxon>Eutheria</taxon>
        <taxon>Laurasiatheria</taxon>
        <taxon>Artiodactyla</taxon>
        <taxon>Tylopoda</taxon>
        <taxon>Camelidae</taxon>
        <taxon>Camelus</taxon>
    </lineage>
</organism>
<dbReference type="EMBL" id="AB178886">
    <property type="protein sequence ID" value="BAD18894.1"/>
    <property type="molecule type" value="mRNA"/>
</dbReference>
<dbReference type="RefSeq" id="NP_001306708.1">
    <property type="nucleotide sequence ID" value="NM_001319779.1"/>
</dbReference>
<dbReference type="SMR" id="Q75N23"/>
<dbReference type="GlyCosmos" id="Q75N23">
    <property type="glycosylation" value="1 site, No reported glycans"/>
</dbReference>
<dbReference type="GeneID" id="105074074"/>
<dbReference type="CTD" id="7124"/>
<dbReference type="OrthoDB" id="30973at91561"/>
<dbReference type="Proteomes" id="UP000694950">
    <property type="component" value="Unplaced"/>
</dbReference>
<dbReference type="GO" id="GO:0009986">
    <property type="term" value="C:cell surface"/>
    <property type="evidence" value="ECO:0007669"/>
    <property type="project" value="TreeGrafter"/>
</dbReference>
<dbReference type="GO" id="GO:0005615">
    <property type="term" value="C:extracellular space"/>
    <property type="evidence" value="ECO:0007669"/>
    <property type="project" value="UniProtKB-KW"/>
</dbReference>
<dbReference type="GO" id="GO:0005886">
    <property type="term" value="C:plasma membrane"/>
    <property type="evidence" value="ECO:0007669"/>
    <property type="project" value="UniProtKB-SubCell"/>
</dbReference>
<dbReference type="GO" id="GO:0005125">
    <property type="term" value="F:cytokine activity"/>
    <property type="evidence" value="ECO:0007669"/>
    <property type="project" value="UniProtKB-KW"/>
</dbReference>
<dbReference type="GO" id="GO:0005164">
    <property type="term" value="F:tumor necrosis factor receptor binding"/>
    <property type="evidence" value="ECO:0007669"/>
    <property type="project" value="InterPro"/>
</dbReference>
<dbReference type="GO" id="GO:0008625">
    <property type="term" value="P:extrinsic apoptotic signaling pathway via death domain receptors"/>
    <property type="evidence" value="ECO:0007669"/>
    <property type="project" value="TreeGrafter"/>
</dbReference>
<dbReference type="GO" id="GO:0006955">
    <property type="term" value="P:immune response"/>
    <property type="evidence" value="ECO:0007669"/>
    <property type="project" value="InterPro"/>
</dbReference>
<dbReference type="GO" id="GO:0097527">
    <property type="term" value="P:necroptotic signaling pathway"/>
    <property type="evidence" value="ECO:0000250"/>
    <property type="project" value="CAFA"/>
</dbReference>
<dbReference type="GO" id="GO:0043242">
    <property type="term" value="P:negative regulation of protein-containing complex disassembly"/>
    <property type="evidence" value="ECO:0000250"/>
    <property type="project" value="UniProtKB"/>
</dbReference>
<dbReference type="GO" id="GO:0043065">
    <property type="term" value="P:positive regulation of apoptotic process"/>
    <property type="evidence" value="ECO:0000250"/>
    <property type="project" value="UniProtKB"/>
</dbReference>
<dbReference type="GO" id="GO:0043123">
    <property type="term" value="P:positive regulation of canonical NF-kappaB signal transduction"/>
    <property type="evidence" value="ECO:0007669"/>
    <property type="project" value="TreeGrafter"/>
</dbReference>
<dbReference type="GO" id="GO:2001238">
    <property type="term" value="P:positive regulation of extrinsic apoptotic signaling pathway"/>
    <property type="evidence" value="ECO:0007669"/>
    <property type="project" value="TreeGrafter"/>
</dbReference>
<dbReference type="GO" id="GO:0043507">
    <property type="term" value="P:positive regulation of JUN kinase activity"/>
    <property type="evidence" value="ECO:0000250"/>
    <property type="project" value="UniProtKB"/>
</dbReference>
<dbReference type="GO" id="GO:0043406">
    <property type="term" value="P:positive regulation of MAP kinase activity"/>
    <property type="evidence" value="ECO:0000250"/>
    <property type="project" value="UniProtKB"/>
</dbReference>
<dbReference type="GO" id="GO:0051092">
    <property type="term" value="P:positive regulation of NF-kappaB transcription factor activity"/>
    <property type="evidence" value="ECO:0000250"/>
    <property type="project" value="UniProtKB"/>
</dbReference>
<dbReference type="GO" id="GO:0001934">
    <property type="term" value="P:positive regulation of protein phosphorylation"/>
    <property type="evidence" value="ECO:0000250"/>
    <property type="project" value="UniProtKB"/>
</dbReference>
<dbReference type="GO" id="GO:0043243">
    <property type="term" value="P:positive regulation of protein-containing complex disassembly"/>
    <property type="evidence" value="ECO:0000250"/>
    <property type="project" value="UniProtKB"/>
</dbReference>
<dbReference type="GO" id="GO:0045944">
    <property type="term" value="P:positive regulation of transcription by RNA polymerase II"/>
    <property type="evidence" value="ECO:0007669"/>
    <property type="project" value="TreeGrafter"/>
</dbReference>
<dbReference type="GO" id="GO:0065008">
    <property type="term" value="P:regulation of biological quality"/>
    <property type="evidence" value="ECO:0007669"/>
    <property type="project" value="UniProtKB-ARBA"/>
</dbReference>
<dbReference type="GO" id="GO:0050793">
    <property type="term" value="P:regulation of developmental process"/>
    <property type="evidence" value="ECO:0007669"/>
    <property type="project" value="UniProtKB-ARBA"/>
</dbReference>
<dbReference type="GO" id="GO:0051239">
    <property type="term" value="P:regulation of multicellular organismal process"/>
    <property type="evidence" value="ECO:0007669"/>
    <property type="project" value="UniProtKB-ARBA"/>
</dbReference>
<dbReference type="GO" id="GO:0051046">
    <property type="term" value="P:regulation of secretion"/>
    <property type="evidence" value="ECO:0007669"/>
    <property type="project" value="UniProtKB-ARBA"/>
</dbReference>
<dbReference type="GO" id="GO:0033209">
    <property type="term" value="P:tumor necrosis factor-mediated signaling pathway"/>
    <property type="evidence" value="ECO:0007669"/>
    <property type="project" value="TreeGrafter"/>
</dbReference>
<dbReference type="GO" id="GO:0010573">
    <property type="term" value="P:vascular endothelial growth factor production"/>
    <property type="evidence" value="ECO:0000250"/>
    <property type="project" value="UniProtKB"/>
</dbReference>
<dbReference type="CDD" id="cd00184">
    <property type="entry name" value="TNF"/>
    <property type="match status" value="1"/>
</dbReference>
<dbReference type="FunFam" id="2.60.120.40:FF:000007">
    <property type="entry name" value="Tumor necrosis factor"/>
    <property type="match status" value="1"/>
</dbReference>
<dbReference type="Gene3D" id="2.60.120.40">
    <property type="match status" value="1"/>
</dbReference>
<dbReference type="InterPro" id="IPR006053">
    <property type="entry name" value="TNF"/>
</dbReference>
<dbReference type="InterPro" id="IPR002959">
    <property type="entry name" value="TNF_alpha"/>
</dbReference>
<dbReference type="InterPro" id="IPR021184">
    <property type="entry name" value="TNF_CS"/>
</dbReference>
<dbReference type="InterPro" id="IPR006052">
    <property type="entry name" value="TNF_dom"/>
</dbReference>
<dbReference type="InterPro" id="IPR008983">
    <property type="entry name" value="Tumour_necrosis_fac-like_dom"/>
</dbReference>
<dbReference type="PANTHER" id="PTHR11471:SF23">
    <property type="entry name" value="TUMOR NECROSIS FACTOR"/>
    <property type="match status" value="1"/>
</dbReference>
<dbReference type="PANTHER" id="PTHR11471">
    <property type="entry name" value="TUMOR NECROSIS FACTOR FAMILY MEMBER"/>
    <property type="match status" value="1"/>
</dbReference>
<dbReference type="Pfam" id="PF00229">
    <property type="entry name" value="TNF"/>
    <property type="match status" value="1"/>
</dbReference>
<dbReference type="PRINTS" id="PR01234">
    <property type="entry name" value="TNECROSISFCT"/>
</dbReference>
<dbReference type="PRINTS" id="PR01235">
    <property type="entry name" value="TNFALPHA"/>
</dbReference>
<dbReference type="SMART" id="SM00207">
    <property type="entry name" value="TNF"/>
    <property type="match status" value="1"/>
</dbReference>
<dbReference type="SUPFAM" id="SSF49842">
    <property type="entry name" value="TNF-like"/>
    <property type="match status" value="1"/>
</dbReference>
<dbReference type="PROSITE" id="PS00251">
    <property type="entry name" value="THD_1"/>
    <property type="match status" value="1"/>
</dbReference>
<dbReference type="PROSITE" id="PS50049">
    <property type="entry name" value="THD_2"/>
    <property type="match status" value="1"/>
</dbReference>
<protein>
    <recommendedName>
        <fullName>Tumor necrosis factor</fullName>
    </recommendedName>
    <alternativeName>
        <fullName>Cachectin</fullName>
    </alternativeName>
    <alternativeName>
        <fullName>TNF-alpha</fullName>
    </alternativeName>
    <alternativeName>
        <fullName>Tumor necrosis factor ligand superfamily member 2</fullName>
        <shortName>TNF-a</shortName>
    </alternativeName>
    <component>
        <recommendedName>
            <fullName>Tumor necrosis factor, membrane form</fullName>
        </recommendedName>
        <alternativeName>
            <fullName>N-terminal fragment</fullName>
            <shortName>NTF</shortName>
        </alternativeName>
    </component>
    <component>
        <recommendedName>
            <fullName>Intracellular domain 1</fullName>
            <shortName>ICD1</shortName>
        </recommendedName>
    </component>
    <component>
        <recommendedName>
            <fullName>Intracellular domain 2</fullName>
            <shortName>ICD2</shortName>
        </recommendedName>
    </component>
    <component>
        <recommendedName>
            <fullName>C-domain 1</fullName>
        </recommendedName>
    </component>
    <component>
        <recommendedName>
            <fullName>C-domain 2</fullName>
        </recommendedName>
    </component>
    <component>
        <recommendedName>
            <fullName>Tumor necrosis factor, soluble form</fullName>
        </recommendedName>
    </component>
</protein>